<comment type="similarity">
    <text evidence="1">Belongs to the LarC family.</text>
</comment>
<reference key="1">
    <citation type="journal article" date="2007" name="ISME J.">
        <title>Population level functional diversity in a microbial community revealed by comparative genomic and metagenomic analyses.</title>
        <authorList>
            <person name="Bhaya D."/>
            <person name="Grossman A.R."/>
            <person name="Steunou A.-S."/>
            <person name="Khuri N."/>
            <person name="Cohan F.M."/>
            <person name="Hamamura N."/>
            <person name="Melendrez M.C."/>
            <person name="Bateson M.M."/>
            <person name="Ward D.M."/>
            <person name="Heidelberg J.F."/>
        </authorList>
    </citation>
    <scope>NUCLEOTIDE SEQUENCE [LARGE SCALE GENOMIC DNA]</scope>
    <source>
        <strain>JA-2-3B'a(2-13)</strain>
    </source>
</reference>
<name>Y182_SYNJB</name>
<gene>
    <name type="ordered locus">CYB_0182</name>
</gene>
<evidence type="ECO:0000255" key="1">
    <source>
        <dbReference type="HAMAP-Rule" id="MF_01074"/>
    </source>
</evidence>
<keyword id="KW-0533">Nickel</keyword>
<keyword id="KW-1185">Reference proteome</keyword>
<proteinExistence type="inferred from homology"/>
<dbReference type="EMBL" id="CP000240">
    <property type="protein sequence ID" value="ABD01182.1"/>
    <property type="molecule type" value="Genomic_DNA"/>
</dbReference>
<dbReference type="RefSeq" id="WP_011431853.1">
    <property type="nucleotide sequence ID" value="NC_007776.1"/>
</dbReference>
<dbReference type="SMR" id="Q2JPU4"/>
<dbReference type="STRING" id="321332.CYB_0182"/>
<dbReference type="KEGG" id="cyb:CYB_0182"/>
<dbReference type="eggNOG" id="COG1641">
    <property type="taxonomic scope" value="Bacteria"/>
</dbReference>
<dbReference type="HOGENOM" id="CLU_028523_2_1_3"/>
<dbReference type="OrthoDB" id="9765625at2"/>
<dbReference type="Proteomes" id="UP000001938">
    <property type="component" value="Chromosome"/>
</dbReference>
<dbReference type="GO" id="GO:0016829">
    <property type="term" value="F:lyase activity"/>
    <property type="evidence" value="ECO:0007669"/>
    <property type="project" value="UniProtKB-UniRule"/>
</dbReference>
<dbReference type="GO" id="GO:0016151">
    <property type="term" value="F:nickel cation binding"/>
    <property type="evidence" value="ECO:0007669"/>
    <property type="project" value="UniProtKB-UniRule"/>
</dbReference>
<dbReference type="Gene3D" id="3.10.20.300">
    <property type="entry name" value="mk0293 like domain"/>
    <property type="match status" value="1"/>
</dbReference>
<dbReference type="Gene3D" id="3.30.70.1380">
    <property type="entry name" value="Transcriptional regulatory protein pf0864 domain like"/>
    <property type="match status" value="1"/>
</dbReference>
<dbReference type="HAMAP" id="MF_01074">
    <property type="entry name" value="LarC"/>
    <property type="match status" value="1"/>
</dbReference>
<dbReference type="InterPro" id="IPR002822">
    <property type="entry name" value="Ni_insertion"/>
</dbReference>
<dbReference type="NCBIfam" id="TIGR00299">
    <property type="entry name" value="nickel pincer cofactor biosynthesis protein LarC"/>
    <property type="match status" value="1"/>
</dbReference>
<dbReference type="PANTHER" id="PTHR36566">
    <property type="entry name" value="NICKEL INSERTION PROTEIN-RELATED"/>
    <property type="match status" value="1"/>
</dbReference>
<dbReference type="PANTHER" id="PTHR36566:SF1">
    <property type="entry name" value="PYRIDINIUM-3,5-BISTHIOCARBOXYLIC ACID MONONUCLEOTIDE NICKEL INSERTION PROTEIN"/>
    <property type="match status" value="1"/>
</dbReference>
<dbReference type="Pfam" id="PF01969">
    <property type="entry name" value="Ni_insertion"/>
    <property type="match status" value="1"/>
</dbReference>
<sequence length="397" mass="43121">MKIAYFDCAAGIAGDMCLGALLDCGVPLEYLNRQLQALGIEGEYGLQVSRVQRCGQPALQAVVEVLGSQSGGSLARHWAEIQALIAGSQLSPAIKARSLAVFEKLAQAEAKVHQMPVEEVHFHEVGAVDALVDIVGTCIGLDWLQVERVLSSPHPVGGGWVSTEHGKLAVPVPAVIELWEMGRVPVFSNGVEAELVTPTGAALAVALAEEFGPCPPMRVEKVGRGAGAQELPIPNVFRLWIGEANGGELTETVSVLQTQIDDLNPQVIAYTCEQLLALGAWDVFTQPITMKQGRPGILLTVICPPDRVPECQDLIFRETTTLGIRHFQQQRTLLERVVERVETPYGLVDIKVARHHGRIVNAQPEFRDCVARAQEFHVPVQTVWLAAQSAWQNRLQG</sequence>
<accession>Q2JPU4</accession>
<organism>
    <name type="scientific">Synechococcus sp. (strain JA-2-3B'a(2-13))</name>
    <name type="common">Cyanobacteria bacterium Yellowstone B-Prime</name>
    <dbReference type="NCBI Taxonomy" id="321332"/>
    <lineage>
        <taxon>Bacteria</taxon>
        <taxon>Bacillati</taxon>
        <taxon>Cyanobacteriota</taxon>
        <taxon>Cyanophyceae</taxon>
        <taxon>Synechococcales</taxon>
        <taxon>Synechococcaceae</taxon>
        <taxon>Synechococcus</taxon>
    </lineage>
</organism>
<feature type="chain" id="PRO_1000064660" description="Putative nickel insertion protein">
    <location>
        <begin position="1"/>
        <end position="397"/>
    </location>
</feature>
<protein>
    <recommendedName>
        <fullName evidence="1">Putative nickel insertion protein</fullName>
    </recommendedName>
</protein>